<gene>
    <name evidence="1" type="primary">secA</name>
    <name type="ordered locus">PA14_57220</name>
</gene>
<keyword id="KW-0067">ATP-binding</keyword>
<keyword id="KW-0997">Cell inner membrane</keyword>
<keyword id="KW-1003">Cell membrane</keyword>
<keyword id="KW-0963">Cytoplasm</keyword>
<keyword id="KW-0472">Membrane</keyword>
<keyword id="KW-0479">Metal-binding</keyword>
<keyword id="KW-0547">Nucleotide-binding</keyword>
<keyword id="KW-0653">Protein transport</keyword>
<keyword id="KW-1278">Translocase</keyword>
<keyword id="KW-0811">Translocation</keyword>
<keyword id="KW-0813">Transport</keyword>
<keyword id="KW-0862">Zinc</keyword>
<evidence type="ECO:0000255" key="1">
    <source>
        <dbReference type="HAMAP-Rule" id="MF_01382"/>
    </source>
</evidence>
<evidence type="ECO:0000256" key="2">
    <source>
        <dbReference type="SAM" id="MobiDB-lite"/>
    </source>
</evidence>
<organism>
    <name type="scientific">Pseudomonas aeruginosa (strain UCBPP-PA14)</name>
    <dbReference type="NCBI Taxonomy" id="208963"/>
    <lineage>
        <taxon>Bacteria</taxon>
        <taxon>Pseudomonadati</taxon>
        <taxon>Pseudomonadota</taxon>
        <taxon>Gammaproteobacteria</taxon>
        <taxon>Pseudomonadales</taxon>
        <taxon>Pseudomonadaceae</taxon>
        <taxon>Pseudomonas</taxon>
    </lineage>
</organism>
<feature type="chain" id="PRO_0000320895" description="Protein translocase subunit SecA">
    <location>
        <begin position="1"/>
        <end position="916"/>
    </location>
</feature>
<feature type="region of interest" description="Disordered" evidence="2">
    <location>
        <begin position="857"/>
        <end position="916"/>
    </location>
</feature>
<feature type="compositionally biased region" description="Basic residues" evidence="2">
    <location>
        <begin position="906"/>
        <end position="916"/>
    </location>
</feature>
<feature type="binding site" evidence="1">
    <location>
        <position position="87"/>
    </location>
    <ligand>
        <name>ATP</name>
        <dbReference type="ChEBI" id="CHEBI:30616"/>
    </ligand>
</feature>
<feature type="binding site" evidence="1">
    <location>
        <begin position="105"/>
        <end position="109"/>
    </location>
    <ligand>
        <name>ATP</name>
        <dbReference type="ChEBI" id="CHEBI:30616"/>
    </ligand>
</feature>
<feature type="binding site" evidence="1">
    <location>
        <position position="512"/>
    </location>
    <ligand>
        <name>ATP</name>
        <dbReference type="ChEBI" id="CHEBI:30616"/>
    </ligand>
</feature>
<feature type="binding site" evidence="1">
    <location>
        <position position="900"/>
    </location>
    <ligand>
        <name>Zn(2+)</name>
        <dbReference type="ChEBI" id="CHEBI:29105"/>
    </ligand>
</feature>
<feature type="binding site" evidence="1">
    <location>
        <position position="902"/>
    </location>
    <ligand>
        <name>Zn(2+)</name>
        <dbReference type="ChEBI" id="CHEBI:29105"/>
    </ligand>
</feature>
<feature type="binding site" evidence="1">
    <location>
        <position position="911"/>
    </location>
    <ligand>
        <name>Zn(2+)</name>
        <dbReference type="ChEBI" id="CHEBI:29105"/>
    </ligand>
</feature>
<feature type="binding site" evidence="1">
    <location>
        <position position="912"/>
    </location>
    <ligand>
        <name>Zn(2+)</name>
        <dbReference type="ChEBI" id="CHEBI:29105"/>
    </ligand>
</feature>
<accession>Q02H37</accession>
<comment type="function">
    <text evidence="1">Part of the Sec protein translocase complex. Interacts with the SecYEG preprotein conducting channel. Has a central role in coupling the hydrolysis of ATP to the transfer of proteins into and across the cell membrane, serving both as a receptor for the preprotein-SecB complex and as an ATP-driven molecular motor driving the stepwise translocation of polypeptide chains across the membrane.</text>
</comment>
<comment type="catalytic activity">
    <reaction evidence="1">
        <text>ATP + H2O + cellular proteinSide 1 = ADP + phosphate + cellular proteinSide 2.</text>
        <dbReference type="EC" id="7.4.2.8"/>
    </reaction>
</comment>
<comment type="cofactor">
    <cofactor evidence="1">
        <name>Zn(2+)</name>
        <dbReference type="ChEBI" id="CHEBI:29105"/>
    </cofactor>
    <text evidence="1">May bind 1 zinc ion per subunit.</text>
</comment>
<comment type="subunit">
    <text evidence="1">Monomer and homodimer. Part of the essential Sec protein translocation apparatus which comprises SecA, SecYEG and auxiliary proteins SecDF-YajC and YidC.</text>
</comment>
<comment type="subcellular location">
    <subcellularLocation>
        <location evidence="1">Cell inner membrane</location>
        <topology evidence="1">Peripheral membrane protein</topology>
        <orientation evidence="1">Cytoplasmic side</orientation>
    </subcellularLocation>
    <subcellularLocation>
        <location evidence="1">Cytoplasm</location>
    </subcellularLocation>
    <text evidence="1">Distribution is 50-50.</text>
</comment>
<comment type="similarity">
    <text evidence="1">Belongs to the SecA family.</text>
</comment>
<proteinExistence type="inferred from homology"/>
<sequence>MFAPLLKKLFGSKNERDVKRMAKAVQAINALEPQMVALSDEQLKAKTAEFQQRYAKGETLDQLLPEAFAVVREAGKRVMGMRHFDVQLIGGMTLHDGKIAEMRTGEGKTLVGTLPVYLNALSGKGVHVVTVNDYLARRDANWMRPLYEFLGLSVGVVTPFQPPEDKRAAYAADITYGTNNEFGFDYLRDNMAFSLDDKFQRELNFAVVDEVDSILIDEARTPLIISGQAEDSSELYIKINKLIPRLNRQVEEVEGKPTEEGHYSIDEKTRQVELNEQGHQFIEDLLSQNGLLGEGESLYSAHNLSLLTHVYAALRAHTLFHRNVEYIVQGDQILLIDEHTGRTMPGRRLSEGLHQAIEAKEGLPIQAESQTLASTTFQNYFRLYNKLAGMTGTADTEAFEFRQIYGLDVVVIPTHRPIARKDFNDLVYLTQEEKYAAIITDIKQCQALGRPILVGTASIESSEYVSKLLQEAGIEHKVLNAKYHEKEAEIIAQAGAPGSVTIATNMAGRGTDILLGGNWEVEVAALENPTEEQIAQIKAEWQKRHQQVIEAGGLHVIASERHESRRIDNQLRGRAGRQGDPGSSRFYLSLEDNLMRIFASDRVKNFMKALGMQSGEAIEHRMVTNAIEKAQRKVEGRNFDIRKQLLEFDDVANEQRKVIYHMRNTLLSAEDVGETIKEFREETLSATINQHIPPQSLPEQWDIEGLEAALYSDFAVRLPIQQWLDEDDKLYEETLRSKILEQIVAAYYEKEELAGAEALRAFEKQMLLRVLDDLWKDHLSTMDHLRHGIHLRGYAQKNPKQEYKRESFTLFQELLDSIKRDTIRVLSHVQVRREDPAEEEARLRREAEELAKRMQFQHAEAPSMEQAVAGEEEELPEGPAPVVPLEPVRNEQKIGRNEPCPCGSGKKYKHCHGQLD</sequence>
<name>SECA_PSEAB</name>
<protein>
    <recommendedName>
        <fullName evidence="1">Protein translocase subunit SecA</fullName>
        <ecNumber evidence="1">7.4.2.8</ecNumber>
    </recommendedName>
</protein>
<dbReference type="EC" id="7.4.2.8" evidence="1"/>
<dbReference type="EMBL" id="CP000438">
    <property type="protein sequence ID" value="ABJ13674.1"/>
    <property type="molecule type" value="Genomic_DNA"/>
</dbReference>
<dbReference type="RefSeq" id="WP_003141268.1">
    <property type="nucleotide sequence ID" value="NZ_CP034244.1"/>
</dbReference>
<dbReference type="SMR" id="Q02H37"/>
<dbReference type="KEGG" id="pau:PA14_57220"/>
<dbReference type="PseudoCAP" id="PA14_57220"/>
<dbReference type="HOGENOM" id="CLU_005314_3_0_6"/>
<dbReference type="BioCyc" id="PAER208963:G1G74-4819-MONOMER"/>
<dbReference type="Proteomes" id="UP000000653">
    <property type="component" value="Chromosome"/>
</dbReference>
<dbReference type="GO" id="GO:0031522">
    <property type="term" value="C:cell envelope Sec protein transport complex"/>
    <property type="evidence" value="ECO:0007669"/>
    <property type="project" value="TreeGrafter"/>
</dbReference>
<dbReference type="GO" id="GO:0005829">
    <property type="term" value="C:cytosol"/>
    <property type="evidence" value="ECO:0007669"/>
    <property type="project" value="TreeGrafter"/>
</dbReference>
<dbReference type="GO" id="GO:0005886">
    <property type="term" value="C:plasma membrane"/>
    <property type="evidence" value="ECO:0007669"/>
    <property type="project" value="UniProtKB-SubCell"/>
</dbReference>
<dbReference type="GO" id="GO:0005524">
    <property type="term" value="F:ATP binding"/>
    <property type="evidence" value="ECO:0007669"/>
    <property type="project" value="UniProtKB-UniRule"/>
</dbReference>
<dbReference type="GO" id="GO:0046872">
    <property type="term" value="F:metal ion binding"/>
    <property type="evidence" value="ECO:0007669"/>
    <property type="project" value="UniProtKB-KW"/>
</dbReference>
<dbReference type="GO" id="GO:0008564">
    <property type="term" value="F:protein-exporting ATPase activity"/>
    <property type="evidence" value="ECO:0007669"/>
    <property type="project" value="UniProtKB-EC"/>
</dbReference>
<dbReference type="GO" id="GO:0065002">
    <property type="term" value="P:intracellular protein transmembrane transport"/>
    <property type="evidence" value="ECO:0007669"/>
    <property type="project" value="UniProtKB-UniRule"/>
</dbReference>
<dbReference type="GO" id="GO:0017038">
    <property type="term" value="P:protein import"/>
    <property type="evidence" value="ECO:0007669"/>
    <property type="project" value="InterPro"/>
</dbReference>
<dbReference type="GO" id="GO:0006605">
    <property type="term" value="P:protein targeting"/>
    <property type="evidence" value="ECO:0007669"/>
    <property type="project" value="UniProtKB-UniRule"/>
</dbReference>
<dbReference type="GO" id="GO:0043952">
    <property type="term" value="P:protein transport by the Sec complex"/>
    <property type="evidence" value="ECO:0007669"/>
    <property type="project" value="TreeGrafter"/>
</dbReference>
<dbReference type="CDD" id="cd17928">
    <property type="entry name" value="DEXDc_SecA"/>
    <property type="match status" value="1"/>
</dbReference>
<dbReference type="CDD" id="cd18803">
    <property type="entry name" value="SF2_C_secA"/>
    <property type="match status" value="1"/>
</dbReference>
<dbReference type="FunFam" id="1.10.3060.10:FF:000001">
    <property type="entry name" value="Preprotein translocase subunit SecA"/>
    <property type="match status" value="1"/>
</dbReference>
<dbReference type="FunFam" id="3.40.50.300:FF:000081">
    <property type="entry name" value="Preprotein translocase subunit SecA"/>
    <property type="match status" value="1"/>
</dbReference>
<dbReference type="FunFam" id="3.40.50.300:FF:000113">
    <property type="entry name" value="Preprotein translocase subunit SecA"/>
    <property type="match status" value="1"/>
</dbReference>
<dbReference type="FunFam" id="3.90.1440.10:FF:000001">
    <property type="entry name" value="Preprotein translocase subunit SecA"/>
    <property type="match status" value="1"/>
</dbReference>
<dbReference type="Gene3D" id="1.10.3060.10">
    <property type="entry name" value="Helical scaffold and wing domains of SecA"/>
    <property type="match status" value="1"/>
</dbReference>
<dbReference type="Gene3D" id="3.40.50.300">
    <property type="entry name" value="P-loop containing nucleotide triphosphate hydrolases"/>
    <property type="match status" value="2"/>
</dbReference>
<dbReference type="Gene3D" id="3.90.1440.10">
    <property type="entry name" value="SecA, preprotein cross-linking domain"/>
    <property type="match status" value="1"/>
</dbReference>
<dbReference type="HAMAP" id="MF_01382">
    <property type="entry name" value="SecA"/>
    <property type="match status" value="1"/>
</dbReference>
<dbReference type="InterPro" id="IPR014001">
    <property type="entry name" value="Helicase_ATP-bd"/>
</dbReference>
<dbReference type="InterPro" id="IPR001650">
    <property type="entry name" value="Helicase_C-like"/>
</dbReference>
<dbReference type="InterPro" id="IPR027417">
    <property type="entry name" value="P-loop_NTPase"/>
</dbReference>
<dbReference type="InterPro" id="IPR004027">
    <property type="entry name" value="SEC_C_motif"/>
</dbReference>
<dbReference type="InterPro" id="IPR000185">
    <property type="entry name" value="SecA"/>
</dbReference>
<dbReference type="InterPro" id="IPR020937">
    <property type="entry name" value="SecA_CS"/>
</dbReference>
<dbReference type="InterPro" id="IPR011115">
    <property type="entry name" value="SecA_DEAD"/>
</dbReference>
<dbReference type="InterPro" id="IPR014018">
    <property type="entry name" value="SecA_motor_DEAD"/>
</dbReference>
<dbReference type="InterPro" id="IPR011130">
    <property type="entry name" value="SecA_preprotein_X-link_dom"/>
</dbReference>
<dbReference type="InterPro" id="IPR044722">
    <property type="entry name" value="SecA_SF2_C"/>
</dbReference>
<dbReference type="InterPro" id="IPR011116">
    <property type="entry name" value="SecA_Wing/Scaffold"/>
</dbReference>
<dbReference type="InterPro" id="IPR036266">
    <property type="entry name" value="SecA_Wing/Scaffold_sf"/>
</dbReference>
<dbReference type="InterPro" id="IPR036670">
    <property type="entry name" value="SecA_X-link_sf"/>
</dbReference>
<dbReference type="NCBIfam" id="NF009538">
    <property type="entry name" value="PRK12904.1"/>
    <property type="match status" value="1"/>
</dbReference>
<dbReference type="NCBIfam" id="TIGR00963">
    <property type="entry name" value="secA"/>
    <property type="match status" value="1"/>
</dbReference>
<dbReference type="PANTHER" id="PTHR30612:SF0">
    <property type="entry name" value="CHLOROPLAST PROTEIN-TRANSPORTING ATPASE"/>
    <property type="match status" value="1"/>
</dbReference>
<dbReference type="PANTHER" id="PTHR30612">
    <property type="entry name" value="SECA INNER MEMBRANE COMPONENT OF SEC PROTEIN SECRETION SYSTEM"/>
    <property type="match status" value="1"/>
</dbReference>
<dbReference type="Pfam" id="PF21090">
    <property type="entry name" value="P-loop_SecA"/>
    <property type="match status" value="1"/>
</dbReference>
<dbReference type="Pfam" id="PF02810">
    <property type="entry name" value="SEC-C"/>
    <property type="match status" value="1"/>
</dbReference>
<dbReference type="Pfam" id="PF07517">
    <property type="entry name" value="SecA_DEAD"/>
    <property type="match status" value="1"/>
</dbReference>
<dbReference type="Pfam" id="PF01043">
    <property type="entry name" value="SecA_PP_bind"/>
    <property type="match status" value="1"/>
</dbReference>
<dbReference type="Pfam" id="PF07516">
    <property type="entry name" value="SecA_SW"/>
    <property type="match status" value="1"/>
</dbReference>
<dbReference type="PRINTS" id="PR00906">
    <property type="entry name" value="SECA"/>
</dbReference>
<dbReference type="SMART" id="SM00957">
    <property type="entry name" value="SecA_DEAD"/>
    <property type="match status" value="1"/>
</dbReference>
<dbReference type="SMART" id="SM00958">
    <property type="entry name" value="SecA_PP_bind"/>
    <property type="match status" value="1"/>
</dbReference>
<dbReference type="SUPFAM" id="SSF81886">
    <property type="entry name" value="Helical scaffold and wing domains of SecA"/>
    <property type="match status" value="1"/>
</dbReference>
<dbReference type="SUPFAM" id="SSF52540">
    <property type="entry name" value="P-loop containing nucleoside triphosphate hydrolases"/>
    <property type="match status" value="2"/>
</dbReference>
<dbReference type="SUPFAM" id="SSF81767">
    <property type="entry name" value="Pre-protein crosslinking domain of SecA"/>
    <property type="match status" value="1"/>
</dbReference>
<dbReference type="PROSITE" id="PS01312">
    <property type="entry name" value="SECA"/>
    <property type="match status" value="1"/>
</dbReference>
<dbReference type="PROSITE" id="PS51196">
    <property type="entry name" value="SECA_MOTOR_DEAD"/>
    <property type="match status" value="1"/>
</dbReference>
<reference key="1">
    <citation type="journal article" date="2006" name="Genome Biol.">
        <title>Genomic analysis reveals that Pseudomonas aeruginosa virulence is combinatorial.</title>
        <authorList>
            <person name="Lee D.G."/>
            <person name="Urbach J.M."/>
            <person name="Wu G."/>
            <person name="Liberati N.T."/>
            <person name="Feinbaum R.L."/>
            <person name="Miyata S."/>
            <person name="Diggins L.T."/>
            <person name="He J."/>
            <person name="Saucier M."/>
            <person name="Deziel E."/>
            <person name="Friedman L."/>
            <person name="Li L."/>
            <person name="Grills G."/>
            <person name="Montgomery K."/>
            <person name="Kucherlapati R."/>
            <person name="Rahme L.G."/>
            <person name="Ausubel F.M."/>
        </authorList>
    </citation>
    <scope>NUCLEOTIDE SEQUENCE [LARGE SCALE GENOMIC DNA]</scope>
    <source>
        <strain>UCBPP-PA14</strain>
    </source>
</reference>